<evidence type="ECO:0000255" key="1"/>
<evidence type="ECO:0000305" key="2"/>
<keyword id="KW-1003">Cell membrane</keyword>
<keyword id="KW-0472">Membrane</keyword>
<keyword id="KW-1185">Reference proteome</keyword>
<keyword id="KW-0812">Transmembrane</keyword>
<keyword id="KW-1133">Transmembrane helix</keyword>
<organism>
    <name type="scientific">Methanothermobacter thermautotrophicus (strain ATCC 29096 / DSM 1053 / JCM 10044 / NBRC 100330 / Delta H)</name>
    <name type="common">Methanobacterium thermoautotrophicum</name>
    <dbReference type="NCBI Taxonomy" id="187420"/>
    <lineage>
        <taxon>Archaea</taxon>
        <taxon>Methanobacteriati</taxon>
        <taxon>Methanobacteriota</taxon>
        <taxon>Methanomada group</taxon>
        <taxon>Methanobacteria</taxon>
        <taxon>Methanobacteriales</taxon>
        <taxon>Methanobacteriaceae</taxon>
        <taxon>Methanothermobacter</taxon>
    </lineage>
</organism>
<comment type="subcellular location">
    <subcellularLocation>
        <location evidence="2">Cell membrane</location>
        <topology evidence="2">Multi-pass membrane protein</topology>
    </subcellularLocation>
</comment>
<comment type="similarity">
    <text evidence="2">To M.jannaschii MJ1223.</text>
</comment>
<name>Y1250_METTH</name>
<protein>
    <recommendedName>
        <fullName>Uncharacterized protein MTH_1250</fullName>
    </recommendedName>
</protein>
<dbReference type="EMBL" id="AE000666">
    <property type="protein sequence ID" value="AAB85739.1"/>
    <property type="molecule type" value="Genomic_DNA"/>
</dbReference>
<dbReference type="PIR" id="B69034">
    <property type="entry name" value="B69034"/>
</dbReference>
<dbReference type="RefSeq" id="WP_010876874.1">
    <property type="nucleotide sequence ID" value="NC_000916.1"/>
</dbReference>
<dbReference type="STRING" id="187420.MTH_1250"/>
<dbReference type="PaxDb" id="187420-MTH_1250"/>
<dbReference type="EnsemblBacteria" id="AAB85739">
    <property type="protein sequence ID" value="AAB85739"/>
    <property type="gene ID" value="MTH_1250"/>
</dbReference>
<dbReference type="GeneID" id="1471658"/>
<dbReference type="KEGG" id="mth:MTH_1250"/>
<dbReference type="PATRIC" id="fig|187420.15.peg.1229"/>
<dbReference type="HOGENOM" id="CLU_189621_0_0_2"/>
<dbReference type="InParanoid" id="O27318"/>
<dbReference type="Proteomes" id="UP000005223">
    <property type="component" value="Chromosome"/>
</dbReference>
<dbReference type="GO" id="GO:0005886">
    <property type="term" value="C:plasma membrane"/>
    <property type="evidence" value="ECO:0007669"/>
    <property type="project" value="UniProtKB-SubCell"/>
</dbReference>
<dbReference type="GO" id="GO:0015075">
    <property type="term" value="F:monoatomic ion transmembrane transporter activity"/>
    <property type="evidence" value="ECO:0007669"/>
    <property type="project" value="InterPro"/>
</dbReference>
<dbReference type="InterPro" id="IPR007208">
    <property type="entry name" value="MrpF/PhaF-like"/>
</dbReference>
<dbReference type="NCBIfam" id="NF009254">
    <property type="entry name" value="PRK12612.1-2"/>
    <property type="match status" value="1"/>
</dbReference>
<dbReference type="Pfam" id="PF04066">
    <property type="entry name" value="MrpF_PhaF"/>
    <property type="match status" value="1"/>
</dbReference>
<accession>O27318</accession>
<reference key="1">
    <citation type="journal article" date="1997" name="J. Bacteriol.">
        <title>Complete genome sequence of Methanobacterium thermoautotrophicum deltaH: functional analysis and comparative genomics.</title>
        <authorList>
            <person name="Smith D.R."/>
            <person name="Doucette-Stamm L.A."/>
            <person name="Deloughery C."/>
            <person name="Lee H.-M."/>
            <person name="Dubois J."/>
            <person name="Aldredge T."/>
            <person name="Bashirzadeh R."/>
            <person name="Blakely D."/>
            <person name="Cook R."/>
            <person name="Gilbert K."/>
            <person name="Harrison D."/>
            <person name="Hoang L."/>
            <person name="Keagle P."/>
            <person name="Lumm W."/>
            <person name="Pothier B."/>
            <person name="Qiu D."/>
            <person name="Spadafora R."/>
            <person name="Vicare R."/>
            <person name="Wang Y."/>
            <person name="Wierzbowski J."/>
            <person name="Gibson R."/>
            <person name="Jiwani N."/>
            <person name="Caruso A."/>
            <person name="Bush D."/>
            <person name="Safer H."/>
            <person name="Patwell D."/>
            <person name="Prabhakar S."/>
            <person name="McDougall S."/>
            <person name="Shimer G."/>
            <person name="Goyal A."/>
            <person name="Pietrovski S."/>
            <person name="Church G.M."/>
            <person name="Daniels C.J."/>
            <person name="Mao J.-I."/>
            <person name="Rice P."/>
            <person name="Noelling J."/>
            <person name="Reeve J.N."/>
        </authorList>
    </citation>
    <scope>NUCLEOTIDE SEQUENCE [LARGE SCALE GENOMIC DNA]</scope>
    <source>
        <strain>ATCC 29096 / DSM 1053 / JCM 10044 / NBRC 100330 / Delta H</strain>
    </source>
</reference>
<sequence length="86" mass="9250">MMDILIIAEYTLLASLAVFSIAAVRIATRRNIRMGLVGISGLNIAIATILILINRMYGIGFCRDIAYALVLLGPVGTIAFARVLRG</sequence>
<feature type="chain" id="PRO_0000107225" description="Uncharacterized protein MTH_1250">
    <location>
        <begin position="1"/>
        <end position="86"/>
    </location>
</feature>
<feature type="transmembrane region" description="Helical" evidence="1">
    <location>
        <begin position="4"/>
        <end position="24"/>
    </location>
</feature>
<feature type="transmembrane region" description="Helical" evidence="1">
    <location>
        <begin position="34"/>
        <end position="54"/>
    </location>
</feature>
<feature type="transmembrane region" description="Helical" evidence="1">
    <location>
        <begin position="64"/>
        <end position="84"/>
    </location>
</feature>
<gene>
    <name type="ordered locus">MTH_1250</name>
</gene>
<proteinExistence type="predicted"/>